<dbReference type="EC" id="3.2.1.21"/>
<dbReference type="EMBL" id="CH476596">
    <property type="protein sequence ID" value="EAU37675.1"/>
    <property type="molecule type" value="Genomic_DNA"/>
</dbReference>
<dbReference type="RefSeq" id="XP_001211891.1">
    <property type="nucleotide sequence ID" value="XM_001211891.1"/>
</dbReference>
<dbReference type="SMR" id="Q0CUC1"/>
<dbReference type="STRING" id="341663.Q0CUC1"/>
<dbReference type="GlyCosmos" id="Q0CUC1">
    <property type="glycosylation" value="14 sites, No reported glycans"/>
</dbReference>
<dbReference type="EnsemblFungi" id="EAU37675">
    <property type="protein sequence ID" value="EAU37675"/>
    <property type="gene ID" value="ATEG_02713"/>
</dbReference>
<dbReference type="GeneID" id="4317206"/>
<dbReference type="VEuPathDB" id="FungiDB:ATEG_02713"/>
<dbReference type="eggNOG" id="ENOG502QR4D">
    <property type="taxonomic scope" value="Eukaryota"/>
</dbReference>
<dbReference type="HOGENOM" id="CLU_004542_2_3_1"/>
<dbReference type="OMA" id="YERGYAM"/>
<dbReference type="OrthoDB" id="416222at2759"/>
<dbReference type="UniPathway" id="UPA00696"/>
<dbReference type="Proteomes" id="UP000007963">
    <property type="component" value="Unassembled WGS sequence"/>
</dbReference>
<dbReference type="GO" id="GO:0005576">
    <property type="term" value="C:extracellular region"/>
    <property type="evidence" value="ECO:0007669"/>
    <property type="project" value="UniProtKB-SubCell"/>
</dbReference>
<dbReference type="GO" id="GO:0008422">
    <property type="term" value="F:beta-glucosidase activity"/>
    <property type="evidence" value="ECO:0007669"/>
    <property type="project" value="UniProtKB-EC"/>
</dbReference>
<dbReference type="GO" id="GO:0030245">
    <property type="term" value="P:cellulose catabolic process"/>
    <property type="evidence" value="ECO:0007669"/>
    <property type="project" value="UniProtKB-UniPathway"/>
</dbReference>
<dbReference type="FunFam" id="2.60.40.10:FF:000757">
    <property type="entry name" value="Beta-glucosidase G"/>
    <property type="match status" value="1"/>
</dbReference>
<dbReference type="FunFam" id="3.20.20.300:FF:000002">
    <property type="entry name" value="Probable beta-glucosidase"/>
    <property type="match status" value="1"/>
</dbReference>
<dbReference type="FunFam" id="3.40.50.1700:FF:000003">
    <property type="entry name" value="Probable beta-glucosidase"/>
    <property type="match status" value="1"/>
</dbReference>
<dbReference type="Gene3D" id="3.40.50.1700">
    <property type="entry name" value="Glycoside hydrolase family 3 C-terminal domain"/>
    <property type="match status" value="1"/>
</dbReference>
<dbReference type="Gene3D" id="3.20.20.300">
    <property type="entry name" value="Glycoside hydrolase, family 3, N-terminal domain"/>
    <property type="match status" value="1"/>
</dbReference>
<dbReference type="Gene3D" id="2.60.40.10">
    <property type="entry name" value="Immunoglobulins"/>
    <property type="match status" value="1"/>
</dbReference>
<dbReference type="InterPro" id="IPR050288">
    <property type="entry name" value="Cellulose_deg_GH3"/>
</dbReference>
<dbReference type="InterPro" id="IPR026891">
    <property type="entry name" value="Fn3-like"/>
</dbReference>
<dbReference type="InterPro" id="IPR002772">
    <property type="entry name" value="Glyco_hydro_3_C"/>
</dbReference>
<dbReference type="InterPro" id="IPR036881">
    <property type="entry name" value="Glyco_hydro_3_C_sf"/>
</dbReference>
<dbReference type="InterPro" id="IPR001764">
    <property type="entry name" value="Glyco_hydro_3_N"/>
</dbReference>
<dbReference type="InterPro" id="IPR036962">
    <property type="entry name" value="Glyco_hydro_3_N_sf"/>
</dbReference>
<dbReference type="InterPro" id="IPR017853">
    <property type="entry name" value="Glycoside_hydrolase_SF"/>
</dbReference>
<dbReference type="InterPro" id="IPR013783">
    <property type="entry name" value="Ig-like_fold"/>
</dbReference>
<dbReference type="PANTHER" id="PTHR42715">
    <property type="entry name" value="BETA-GLUCOSIDASE"/>
    <property type="match status" value="1"/>
</dbReference>
<dbReference type="PANTHER" id="PTHR42715:SF12">
    <property type="entry name" value="BETA-GLUCOSIDASE G-RELATED"/>
    <property type="match status" value="1"/>
</dbReference>
<dbReference type="Pfam" id="PF14310">
    <property type="entry name" value="Fn3-like"/>
    <property type="match status" value="1"/>
</dbReference>
<dbReference type="Pfam" id="PF00933">
    <property type="entry name" value="Glyco_hydro_3"/>
    <property type="match status" value="1"/>
</dbReference>
<dbReference type="Pfam" id="PF01915">
    <property type="entry name" value="Glyco_hydro_3_C"/>
    <property type="match status" value="1"/>
</dbReference>
<dbReference type="PRINTS" id="PR00133">
    <property type="entry name" value="GLHYDRLASE3"/>
</dbReference>
<dbReference type="SMART" id="SM01217">
    <property type="entry name" value="Fn3_like"/>
    <property type="match status" value="1"/>
</dbReference>
<dbReference type="SUPFAM" id="SSF51445">
    <property type="entry name" value="(Trans)glycosidases"/>
    <property type="match status" value="1"/>
</dbReference>
<dbReference type="SUPFAM" id="SSF52279">
    <property type="entry name" value="Beta-D-glucan exohydrolase, C-terminal domain"/>
    <property type="match status" value="1"/>
</dbReference>
<comment type="function">
    <text evidence="1">Beta-glucosidases are one of a number of cellulolytic enzymes involved in the degradation of cellulosic biomass. Catalyzes the last step releasing glucose from the inhibitory cellobiose (By similarity).</text>
</comment>
<comment type="catalytic activity">
    <reaction>
        <text>Hydrolysis of terminal, non-reducing beta-D-glucosyl residues with release of beta-D-glucose.</text>
        <dbReference type="EC" id="3.2.1.21"/>
    </reaction>
</comment>
<comment type="pathway">
    <text>Glycan metabolism; cellulose degradation.</text>
</comment>
<comment type="subcellular location">
    <subcellularLocation>
        <location evidence="1">Secreted</location>
    </subcellularLocation>
</comment>
<comment type="similarity">
    <text evidence="3">Belongs to the glycosyl hydrolase 3 family.</text>
</comment>
<organism>
    <name type="scientific">Aspergillus terreus (strain NIH 2624 / FGSC A1156)</name>
    <dbReference type="NCBI Taxonomy" id="341663"/>
    <lineage>
        <taxon>Eukaryota</taxon>
        <taxon>Fungi</taxon>
        <taxon>Dikarya</taxon>
        <taxon>Ascomycota</taxon>
        <taxon>Pezizomycotina</taxon>
        <taxon>Eurotiomycetes</taxon>
        <taxon>Eurotiomycetidae</taxon>
        <taxon>Eurotiales</taxon>
        <taxon>Aspergillaceae</taxon>
        <taxon>Aspergillus</taxon>
        <taxon>Aspergillus subgen. Circumdati</taxon>
    </lineage>
</organism>
<sequence>MANIAHLIVSGLLAATVAHGQQYEGSSRSEDAFSYVQPRNTTILGQYGHSPAVLPSPNSTGSGGWQAAHTKARHFVSQLTLEEKADMVTGQPGPCVGNIVAIPRLGFNGLCLQDGPLAIRVADYASVFSAGVTAASTWDRDVLYERAFAMGQEFRAKGAHIALGPVAGPLGRSAYGGRNWEGFAADPYLTGVAMELSVKGYHDAGVQATPKHFIGNEQETQRNPIYNPNGTITDVLQEAVSSNIDDRTMHELYLWPFANAAHAKAAAFMCSYQRLNGSYACQNSKALNGLLKEELGFQGYVMSDWGGTHSGVASIESGLDMNMPGGLGPYGTIPQAGSFYGGNVTQGVKNGTIDEARVDDMIIRIMTPYYWLGQDKDFPSVDPSSADLNTFSPRSTWLRQFNLTGERNRDVRGDHAKIIRRQAAEATVLLKNEKNALPLKSPKSLAIFGNDAGEPTMGAVNQANFEFGTLAAGGGSGTGRFTYVVSPLEAIQSRAKQANTLVQYWMNNTDIATTDVTTLWVPAPPDACLVFLKTWAEEGEDREYLHVDYDGNDVVSSVASKCNNTIVVTHSSGINELPFADHPNVTAILAAHYPGQESGNSIVDVLYGDVNPSGRLPYTIARNGSEYNAPPTTEVTTTGAEDWQAWFNEKLEIDYRYFDAHNISVLYEFGFGLSYTTFNLSEINAEPLVESISSVPEQRPIQPGGNPALWENVYNVSVVVTNTGDVEGKAVPQLYVTFPDSTPAGTPPKQLRGFDKVALKPGQSQAASFQLMRRDLSYWDVVSQQWLIPEGEFVISVGFSSRDLREVVRVTPVSGST</sequence>
<evidence type="ECO:0000250" key="1"/>
<evidence type="ECO:0000255" key="2"/>
<evidence type="ECO:0000305" key="3"/>
<feature type="signal peptide" evidence="2">
    <location>
        <begin position="1"/>
        <end position="20"/>
    </location>
</feature>
<feature type="chain" id="PRO_0000394118" description="Probable beta-glucosidase G">
    <location>
        <begin position="21"/>
        <end position="817"/>
    </location>
</feature>
<feature type="active site" evidence="1">
    <location>
        <position position="304"/>
    </location>
</feature>
<feature type="glycosylation site" description="N-linked (GlcNAc...) asparagine" evidence="2">
    <location>
        <position position="40"/>
    </location>
</feature>
<feature type="glycosylation site" description="N-linked (GlcNAc...) asparagine" evidence="2">
    <location>
        <position position="58"/>
    </location>
</feature>
<feature type="glycosylation site" description="N-linked (GlcNAc...) asparagine" evidence="2">
    <location>
        <position position="229"/>
    </location>
</feature>
<feature type="glycosylation site" description="N-linked (GlcNAc...) asparagine" evidence="2">
    <location>
        <position position="276"/>
    </location>
</feature>
<feature type="glycosylation site" description="N-linked (GlcNAc...) asparagine" evidence="2">
    <location>
        <position position="343"/>
    </location>
</feature>
<feature type="glycosylation site" description="N-linked (GlcNAc...) asparagine" evidence="2">
    <location>
        <position position="350"/>
    </location>
</feature>
<feature type="glycosylation site" description="N-linked (GlcNAc...) asparagine" evidence="2">
    <location>
        <position position="402"/>
    </location>
</feature>
<feature type="glycosylation site" description="N-linked (GlcNAc...) asparagine" evidence="2">
    <location>
        <position position="507"/>
    </location>
</feature>
<feature type="glycosylation site" description="N-linked (GlcNAc...) asparagine" evidence="2">
    <location>
        <position position="563"/>
    </location>
</feature>
<feature type="glycosylation site" description="N-linked (GlcNAc...) asparagine" evidence="2">
    <location>
        <position position="584"/>
    </location>
</feature>
<feature type="glycosylation site" description="N-linked (GlcNAc...) asparagine" evidence="2">
    <location>
        <position position="623"/>
    </location>
</feature>
<feature type="glycosylation site" description="N-linked (GlcNAc...) asparagine" evidence="2">
    <location>
        <position position="662"/>
    </location>
</feature>
<feature type="glycosylation site" description="N-linked (GlcNAc...) asparagine" evidence="2">
    <location>
        <position position="679"/>
    </location>
</feature>
<feature type="glycosylation site" description="N-linked (GlcNAc...) asparagine" evidence="2">
    <location>
        <position position="715"/>
    </location>
</feature>
<accession>Q0CUC1</accession>
<keyword id="KW-0119">Carbohydrate metabolism</keyword>
<keyword id="KW-0136">Cellulose degradation</keyword>
<keyword id="KW-0325">Glycoprotein</keyword>
<keyword id="KW-0326">Glycosidase</keyword>
<keyword id="KW-0378">Hydrolase</keyword>
<keyword id="KW-0624">Polysaccharide degradation</keyword>
<keyword id="KW-1185">Reference proteome</keyword>
<keyword id="KW-0964">Secreted</keyword>
<keyword id="KW-0732">Signal</keyword>
<gene>
    <name type="primary">bglG</name>
    <name type="ORF">ATEG_02713</name>
</gene>
<name>BGLG_ASPTN</name>
<proteinExistence type="inferred from homology"/>
<protein>
    <recommendedName>
        <fullName>Probable beta-glucosidase G</fullName>
        <ecNumber>3.2.1.21</ecNumber>
    </recommendedName>
    <alternativeName>
        <fullName>Beta-D-glucoside glucohydrolase G</fullName>
    </alternativeName>
    <alternativeName>
        <fullName>Cellobiase G</fullName>
    </alternativeName>
    <alternativeName>
        <fullName>Gentiobiase G</fullName>
    </alternativeName>
</protein>
<reference key="1">
    <citation type="submission" date="2005-09" db="EMBL/GenBank/DDBJ databases">
        <title>Annotation of the Aspergillus terreus NIH2624 genome.</title>
        <authorList>
            <person name="Birren B.W."/>
            <person name="Lander E.S."/>
            <person name="Galagan J.E."/>
            <person name="Nusbaum C."/>
            <person name="Devon K."/>
            <person name="Henn M."/>
            <person name="Ma L.-J."/>
            <person name="Jaffe D.B."/>
            <person name="Butler J."/>
            <person name="Alvarez P."/>
            <person name="Gnerre S."/>
            <person name="Grabherr M."/>
            <person name="Kleber M."/>
            <person name="Mauceli E.W."/>
            <person name="Brockman W."/>
            <person name="Rounsley S."/>
            <person name="Young S.K."/>
            <person name="LaButti K."/>
            <person name="Pushparaj V."/>
            <person name="DeCaprio D."/>
            <person name="Crawford M."/>
            <person name="Koehrsen M."/>
            <person name="Engels R."/>
            <person name="Montgomery P."/>
            <person name="Pearson M."/>
            <person name="Howarth C."/>
            <person name="Larson L."/>
            <person name="Luoma S."/>
            <person name="White J."/>
            <person name="Alvarado L."/>
            <person name="Kodira C.D."/>
            <person name="Zeng Q."/>
            <person name="Oleary S."/>
            <person name="Yandava C."/>
            <person name="Denning D.W."/>
            <person name="Nierman W.C."/>
            <person name="Milne T."/>
            <person name="Madden K."/>
        </authorList>
    </citation>
    <scope>NUCLEOTIDE SEQUENCE [LARGE SCALE GENOMIC DNA]</scope>
    <source>
        <strain>NIH 2624 / FGSC A1156</strain>
    </source>
</reference>